<geneLocation type="chloroplast"/>
<evidence type="ECO:0000250" key="1"/>
<evidence type="ECO:0000255" key="2">
    <source>
        <dbReference type="HAMAP-Rule" id="MF_01320"/>
    </source>
</evidence>
<evidence type="ECO:0000256" key="3">
    <source>
        <dbReference type="SAM" id="MobiDB-lite"/>
    </source>
</evidence>
<evidence type="ECO:0000305" key="4"/>
<dbReference type="EMBL" id="X59015">
    <property type="protein sequence ID" value="CAA41756.1"/>
    <property type="molecule type" value="Genomic_DNA"/>
</dbReference>
<dbReference type="EMBL" id="AY007495">
    <property type="protein sequence ID" value="AAG23857.1"/>
    <property type="molecule type" value="Genomic_DNA"/>
</dbReference>
<dbReference type="PIR" id="S17442">
    <property type="entry name" value="S17442"/>
</dbReference>
<dbReference type="RefSeq" id="YP_003587591.1">
    <property type="nucleotide sequence ID" value="NC_014057.1"/>
</dbReference>
<dbReference type="SMR" id="P31163"/>
<dbReference type="GeneID" id="9073146"/>
<dbReference type="GO" id="GO:0009507">
    <property type="term" value="C:chloroplast"/>
    <property type="evidence" value="ECO:0007669"/>
    <property type="project" value="UniProtKB-SubCell"/>
</dbReference>
<dbReference type="GO" id="GO:0005762">
    <property type="term" value="C:mitochondrial large ribosomal subunit"/>
    <property type="evidence" value="ECO:0007669"/>
    <property type="project" value="TreeGrafter"/>
</dbReference>
<dbReference type="GO" id="GO:0019843">
    <property type="term" value="F:rRNA binding"/>
    <property type="evidence" value="ECO:0007669"/>
    <property type="project" value="UniProtKB-UniRule"/>
</dbReference>
<dbReference type="GO" id="GO:0003735">
    <property type="term" value="F:structural constituent of ribosome"/>
    <property type="evidence" value="ECO:0007669"/>
    <property type="project" value="InterPro"/>
</dbReference>
<dbReference type="GO" id="GO:0016740">
    <property type="term" value="F:transferase activity"/>
    <property type="evidence" value="ECO:0007669"/>
    <property type="project" value="InterPro"/>
</dbReference>
<dbReference type="GO" id="GO:0032543">
    <property type="term" value="P:mitochondrial translation"/>
    <property type="evidence" value="ECO:0007669"/>
    <property type="project" value="TreeGrafter"/>
</dbReference>
<dbReference type="FunFam" id="4.10.950.10:FF:000001">
    <property type="entry name" value="50S ribosomal protein L2"/>
    <property type="match status" value="1"/>
</dbReference>
<dbReference type="FunFam" id="2.30.30.30:FF:000008">
    <property type="entry name" value="50S ribosomal protein L2, chloroplastic"/>
    <property type="match status" value="1"/>
</dbReference>
<dbReference type="FunFam" id="2.40.50.140:FF:000029">
    <property type="entry name" value="50S ribosomal protein L2, chloroplastic"/>
    <property type="match status" value="1"/>
</dbReference>
<dbReference type="Gene3D" id="2.30.30.30">
    <property type="match status" value="1"/>
</dbReference>
<dbReference type="Gene3D" id="2.40.50.140">
    <property type="entry name" value="Nucleic acid-binding proteins"/>
    <property type="match status" value="1"/>
</dbReference>
<dbReference type="Gene3D" id="4.10.950.10">
    <property type="entry name" value="Ribosomal protein L2, domain 3"/>
    <property type="match status" value="1"/>
</dbReference>
<dbReference type="HAMAP" id="MF_01320_B">
    <property type="entry name" value="Ribosomal_uL2_B"/>
    <property type="match status" value="1"/>
</dbReference>
<dbReference type="InterPro" id="IPR012340">
    <property type="entry name" value="NA-bd_OB-fold"/>
</dbReference>
<dbReference type="InterPro" id="IPR014722">
    <property type="entry name" value="Rib_uL2_dom2"/>
</dbReference>
<dbReference type="InterPro" id="IPR002171">
    <property type="entry name" value="Ribosomal_uL2"/>
</dbReference>
<dbReference type="InterPro" id="IPR005880">
    <property type="entry name" value="Ribosomal_uL2_bac/org-type"/>
</dbReference>
<dbReference type="InterPro" id="IPR022669">
    <property type="entry name" value="Ribosomal_uL2_C"/>
</dbReference>
<dbReference type="InterPro" id="IPR022671">
    <property type="entry name" value="Ribosomal_uL2_CS"/>
</dbReference>
<dbReference type="InterPro" id="IPR014726">
    <property type="entry name" value="Ribosomal_uL2_dom3"/>
</dbReference>
<dbReference type="InterPro" id="IPR022666">
    <property type="entry name" value="Ribosomal_uL2_RNA-bd_dom"/>
</dbReference>
<dbReference type="InterPro" id="IPR008991">
    <property type="entry name" value="Translation_prot_SH3-like_sf"/>
</dbReference>
<dbReference type="NCBIfam" id="TIGR01171">
    <property type="entry name" value="rplB_bact"/>
    <property type="match status" value="1"/>
</dbReference>
<dbReference type="PANTHER" id="PTHR13691:SF5">
    <property type="entry name" value="LARGE RIBOSOMAL SUBUNIT PROTEIN UL2M"/>
    <property type="match status" value="1"/>
</dbReference>
<dbReference type="PANTHER" id="PTHR13691">
    <property type="entry name" value="RIBOSOMAL PROTEIN L2"/>
    <property type="match status" value="1"/>
</dbReference>
<dbReference type="Pfam" id="PF00181">
    <property type="entry name" value="Ribosomal_L2"/>
    <property type="match status" value="1"/>
</dbReference>
<dbReference type="Pfam" id="PF03947">
    <property type="entry name" value="Ribosomal_L2_C"/>
    <property type="match status" value="1"/>
</dbReference>
<dbReference type="PIRSF" id="PIRSF002158">
    <property type="entry name" value="Ribosomal_L2"/>
    <property type="match status" value="1"/>
</dbReference>
<dbReference type="SMART" id="SM01383">
    <property type="entry name" value="Ribosomal_L2"/>
    <property type="match status" value="1"/>
</dbReference>
<dbReference type="SMART" id="SM01382">
    <property type="entry name" value="Ribosomal_L2_C"/>
    <property type="match status" value="1"/>
</dbReference>
<dbReference type="SUPFAM" id="SSF50249">
    <property type="entry name" value="Nucleic acid-binding proteins"/>
    <property type="match status" value="1"/>
</dbReference>
<dbReference type="SUPFAM" id="SSF50104">
    <property type="entry name" value="Translation proteins SH3-like domain"/>
    <property type="match status" value="1"/>
</dbReference>
<dbReference type="PROSITE" id="PS00467">
    <property type="entry name" value="RIBOSOMAL_L2"/>
    <property type="match status" value="1"/>
</dbReference>
<keyword id="KW-0150">Chloroplast</keyword>
<keyword id="KW-0934">Plastid</keyword>
<keyword id="KW-0687">Ribonucleoprotein</keyword>
<keyword id="KW-0689">Ribosomal protein</keyword>
<name>RK2_PEA</name>
<comment type="subunit">
    <text evidence="1">Part of the 50S ribosomal subunit.</text>
</comment>
<comment type="subcellular location">
    <subcellularLocation>
        <location>Plastid</location>
        <location>Chloroplast</location>
    </subcellularLocation>
</comment>
<comment type="similarity">
    <text evidence="4">Belongs to the universal ribosomal protein uL2 family.</text>
</comment>
<gene>
    <name type="primary">rpl2</name>
</gene>
<reference key="1">
    <citation type="journal article" date="1991" name="Plant Mol. Biol.">
        <title>Nucleotide sequence and expression of the ribosomal protein L2 gene in pea chloroplasts.</title>
        <authorList>
            <person name="Nagano Y."/>
            <person name="Ishikawa H."/>
            <person name="Matsuno R."/>
            <person name="Sasaki Y."/>
        </authorList>
    </citation>
    <scope>NUCLEOTIDE SEQUENCE [GENOMIC DNA]</scope>
    <source>
        <strain>cv. Alaska</strain>
    </source>
</reference>
<reference key="2">
    <citation type="submission" date="2000-02" db="EMBL/GenBank/DDBJ databases">
        <title>Long branches in the seed plants and the root of the angiosperms.</title>
        <authorList>
            <person name="Graham S.W."/>
            <person name="Reeves P.A."/>
            <person name="Burns A."/>
            <person name="Olmstead R.G."/>
        </authorList>
    </citation>
    <scope>NUCLEOTIDE SEQUENCE [GENOMIC DNA] OF 47-236</scope>
</reference>
<protein>
    <recommendedName>
        <fullName evidence="2">Large ribosomal subunit protein uL2c</fullName>
    </recommendedName>
    <alternativeName>
        <fullName evidence="4">50S ribosomal protein L2, chloroplastic</fullName>
    </alternativeName>
</protein>
<feature type="chain" id="PRO_0000129692" description="Large ribosomal subunit protein uL2c">
    <location>
        <begin position="1"/>
        <end position="273"/>
    </location>
</feature>
<feature type="region of interest" description="Disordered" evidence="3">
    <location>
        <begin position="1"/>
        <end position="53"/>
    </location>
</feature>
<feature type="region of interest" description="Disordered" evidence="3">
    <location>
        <begin position="222"/>
        <end position="273"/>
    </location>
</feature>
<feature type="compositionally biased region" description="Polar residues" evidence="3">
    <location>
        <begin position="1"/>
        <end position="31"/>
    </location>
</feature>
<feature type="sequence conflict" description="In Ref. 2; AAG23857." evidence="4" ref="2">
    <original>K</original>
    <variation>KG</variation>
    <location>
        <position position="106"/>
    </location>
</feature>
<feature type="sequence conflict" description="In Ref. 2; AAG23857." evidence="4" ref="2">
    <original>V</original>
    <variation>A</variation>
    <location>
        <position position="205"/>
    </location>
</feature>
<sequence>MAIHLSKTSSPSTRNGAVNSQVKSNSRNRLISGQHHCGKGRNPRGIITAGHRGGGHKRLYRKIDFRRNEKDIYGRIITIEYDPNRNAHICLIHYGDGEKRYILHPKAIIGDTIVYGTEVPIKMGNALPLTDMPLGTAIHNIEITLGKGGQLARAAGAVAKLIAKEGKSATLKLPSGEVRLISKNCSATVGQVGNVGVNQKSLGRVGAKRWRGKRPVVRGVVMNPVDHPHGGGEGRAPIGRKKPSTPWGYPALGRRTRKSNKYSDNLILRRRSK</sequence>
<accession>P31163</accession>
<accession>Q8HRW6</accession>
<organism>
    <name type="scientific">Pisum sativum</name>
    <name type="common">Garden pea</name>
    <name type="synonym">Lathyrus oleraceus</name>
    <dbReference type="NCBI Taxonomy" id="3888"/>
    <lineage>
        <taxon>Eukaryota</taxon>
        <taxon>Viridiplantae</taxon>
        <taxon>Streptophyta</taxon>
        <taxon>Embryophyta</taxon>
        <taxon>Tracheophyta</taxon>
        <taxon>Spermatophyta</taxon>
        <taxon>Magnoliopsida</taxon>
        <taxon>eudicotyledons</taxon>
        <taxon>Gunneridae</taxon>
        <taxon>Pentapetalae</taxon>
        <taxon>rosids</taxon>
        <taxon>fabids</taxon>
        <taxon>Fabales</taxon>
        <taxon>Fabaceae</taxon>
        <taxon>Papilionoideae</taxon>
        <taxon>50 kb inversion clade</taxon>
        <taxon>NPAAA clade</taxon>
        <taxon>Hologalegina</taxon>
        <taxon>IRL clade</taxon>
        <taxon>Fabeae</taxon>
        <taxon>Pisum</taxon>
    </lineage>
</organism>
<proteinExistence type="inferred from homology"/>